<organism>
    <name type="scientific">Chlamydomonas reinhardtii</name>
    <name type="common">Chlamydomonas smithii</name>
    <dbReference type="NCBI Taxonomy" id="3055"/>
    <lineage>
        <taxon>Eukaryota</taxon>
        <taxon>Viridiplantae</taxon>
        <taxon>Chlorophyta</taxon>
        <taxon>core chlorophytes</taxon>
        <taxon>Chlorophyceae</taxon>
        <taxon>CS clade</taxon>
        <taxon>Chlamydomonadales</taxon>
        <taxon>Chlamydomonadaceae</taxon>
        <taxon>Chlamydomonas</taxon>
    </lineage>
</organism>
<comment type="function">
    <text evidence="2">Stabilizes dimeric photosystem II (PSII). In its absence there is a reduction of monomeric PSII (By similarity).</text>
</comment>
<comment type="subunit">
    <text evidence="5 6">Part of the photosystem II complex. PSII is composed of 1 copy each of membrane proteins PsbA, PsbB, PsbC, PsbD, numerous small proteins, at least 3 peripheral proteins of the oxygen-evolving complex and a large number of cofactors. It forms dimeric complexes.</text>
</comment>
<comment type="subcellular location">
    <subcellularLocation>
        <location evidence="5 6">Plastid</location>
        <location evidence="5 6">Chloroplast thylakoid membrane</location>
        <topology>Single-pass membrane protein</topology>
    </subcellularLocation>
    <text evidence="3">The N-terminus is found within the thylakoid lumen (By similarity).</text>
</comment>
<comment type="developmental stage">
    <text evidence="5">Present in dark-grown plants it increases upon exposure to light.</text>
</comment>
<comment type="similarity">
    <text evidence="7">Belongs to the psbW family.</text>
</comment>
<gene>
    <name type="primary">psbW</name>
</gene>
<name>PSBW_CHLRE</name>
<keyword id="KW-0002">3D-structure</keyword>
<keyword id="KW-0150">Chloroplast</keyword>
<keyword id="KW-0903">Direct protein sequencing</keyword>
<keyword id="KW-0472">Membrane</keyword>
<keyword id="KW-0602">Photosynthesis</keyword>
<keyword id="KW-0604">Photosystem II</keyword>
<keyword id="KW-0934">Plastid</keyword>
<keyword id="KW-0793">Thylakoid</keyword>
<keyword id="KW-0809">Transit peptide</keyword>
<keyword id="KW-0812">Transmembrane</keyword>
<keyword id="KW-1133">Transmembrane helix</keyword>
<accession>Q9SPI9</accession>
<accession>Q7M1J4</accession>
<evidence type="ECO:0000250" key="1"/>
<evidence type="ECO:0000250" key="2">
    <source>
        <dbReference type="UniProtKB" id="Q39194"/>
    </source>
</evidence>
<evidence type="ECO:0000250" key="3">
    <source>
        <dbReference type="UniProtKB" id="Q41387"/>
    </source>
</evidence>
<evidence type="ECO:0000255" key="4"/>
<evidence type="ECO:0000269" key="5">
    <source>
    </source>
</evidence>
<evidence type="ECO:0000269" key="6">
    <source>
    </source>
</evidence>
<evidence type="ECO:0000305" key="7"/>
<evidence type="ECO:0007829" key="8">
    <source>
        <dbReference type="PDB" id="6KAC"/>
    </source>
</evidence>
<feature type="transit peptide" description="Chloroplast" evidence="4">
    <location>
        <begin position="1"/>
        <end position="30"/>
    </location>
</feature>
<feature type="transit peptide" description="Thylakoid" evidence="6">
    <location>
        <begin position="31"/>
        <end position="59"/>
    </location>
</feature>
<feature type="chain" id="PRO_0000005339" description="Photosystem II reaction center W protein, chloroplastic">
    <location>
        <begin position="60"/>
        <end position="115"/>
    </location>
</feature>
<feature type="topological domain" description="Lumenal, thylakoid" evidence="1">
    <location>
        <begin position="60"/>
        <end position="78"/>
    </location>
</feature>
<feature type="transmembrane region" description="Helical" evidence="4">
    <location>
        <begin position="79"/>
        <end position="99"/>
    </location>
</feature>
<feature type="topological domain" description="Stromal" evidence="1">
    <location>
        <begin position="100"/>
        <end position="115"/>
    </location>
</feature>
<feature type="sequence conflict" description="In Ref. 2; AA sequence." evidence="7" ref="2">
    <original>R</original>
    <variation>L</variation>
    <location>
        <position position="72"/>
    </location>
</feature>
<feature type="strand" evidence="8">
    <location>
        <begin position="68"/>
        <end position="70"/>
    </location>
</feature>
<feature type="helix" evidence="8">
    <location>
        <begin position="73"/>
        <end position="75"/>
    </location>
</feature>
<feature type="helix" evidence="8">
    <location>
        <begin position="79"/>
        <end position="98"/>
    </location>
</feature>
<feature type="helix" evidence="8">
    <location>
        <begin position="99"/>
        <end position="102"/>
    </location>
</feature>
<feature type="strand" evidence="8">
    <location>
        <begin position="112"/>
        <end position="114"/>
    </location>
</feature>
<reference key="1">
    <citation type="online journal article" date="1999" name="Plant Gene Register">
        <title>Molecular cloning and sequence analysis of the Chlamydomonas reinhardtii nuclear gene encoding the photosystem II subunit PsbW.</title>
        <authorList>
            <person name="Bishop C.L."/>
            <person name="Cain A.J."/>
            <person name="Purton S."/>
            <person name="Nugent J.H.A."/>
        </authorList>
        <locator>PGR99-141</locator>
    </citation>
    <scope>NUCLEOTIDE SEQUENCE [GENOMIC DNA]</scope>
    <source>
        <strain>cw15</strain>
    </source>
</reference>
<reference key="2">
    <citation type="journal article" date="1991" name="J. Biol. Chem.">
        <title>Photosystem II particles from Chlamydomonas reinhardtii. Purification, molecular weight, small subunit composition, and protein phosphorylation.</title>
        <authorList>
            <person name="de Vitry C."/>
            <person name="Diner B.A."/>
            <person name="Popo J.-L."/>
        </authorList>
    </citation>
    <scope>PROTEIN SEQUENCE OF 60-75</scope>
    <scope>IDENTIFICATION AS A SUBUNIT OF PHOTOSYSTEM II</scope>
    <scope>SUBUNIT</scope>
    <scope>SUBCELLULAR LOCATION</scope>
    <source>
        <strain>F54-14</strain>
    </source>
</reference>
<reference key="3">
    <citation type="journal article" date="2003" name="Plant Mol. Biol.">
        <title>Molecular analysis of the Chlamydomonas nuclear gene encoding PsbW and demonstration that PsbW is a subunit of photosystem II, but not photosystem I.</title>
        <authorList>
            <person name="Bishop C.L."/>
            <person name="Purton S."/>
            <person name="Nugent J.H.A."/>
        </authorList>
    </citation>
    <scope>CONFIRMATION AS A SUBUNIT OF PHOTOSYSTEM II</scope>
    <scope>SUBUNIT</scope>
    <scope>SUBCELLULAR LOCATION</scope>
    <scope>DEVELOPMENTAL STAGE</scope>
    <source>
        <strain>2137</strain>
    </source>
</reference>
<sequence>MQALSARAPRVAAKPVSRSGARSAVTVVCKATTVRSEVAKKVAMLSTLPATLAAHPAFALVDERMNGDGTGRPFGVNDPVLGWVLLGVFGTMWAIWFIGQKDLGDFEDADDGLKL</sequence>
<proteinExistence type="evidence at protein level"/>
<dbReference type="EMBL" id="AF170026">
    <property type="protein sequence ID" value="AAD50464.1"/>
    <property type="molecule type" value="Genomic_DNA"/>
</dbReference>
<dbReference type="PIR" id="A41170">
    <property type="entry name" value="A41170"/>
</dbReference>
<dbReference type="RefSeq" id="XP_001702016.1">
    <property type="nucleotide sequence ID" value="XM_001701964.1"/>
</dbReference>
<dbReference type="PDB" id="6KAC">
    <property type="method" value="EM"/>
    <property type="resolution" value="2.70 A"/>
    <property type="chains" value="W/w=1-115"/>
</dbReference>
<dbReference type="PDB" id="6KAD">
    <property type="method" value="EM"/>
    <property type="resolution" value="3.40 A"/>
    <property type="chains" value="W/w=1-115"/>
</dbReference>
<dbReference type="PDB" id="6KAF">
    <property type="method" value="EM"/>
    <property type="resolution" value="3.73 A"/>
    <property type="chains" value="W/w=1-115"/>
</dbReference>
<dbReference type="PDBsum" id="6KAC"/>
<dbReference type="PDBsum" id="6KAD"/>
<dbReference type="PDBsum" id="6KAF"/>
<dbReference type="EMDB" id="EMD-9955"/>
<dbReference type="EMDB" id="EMD-9956"/>
<dbReference type="EMDB" id="EMD-9957"/>
<dbReference type="SMR" id="Q9SPI9"/>
<dbReference type="PaxDb" id="3055-EDO97291"/>
<dbReference type="eggNOG" id="ENOG502SDRE">
    <property type="taxonomic scope" value="Eukaryota"/>
</dbReference>
<dbReference type="HOGENOM" id="CLU_2076233_0_0_1"/>
<dbReference type="OMA" id="VMARECK"/>
<dbReference type="BioCyc" id="CHLAMY:CHLREDRAFT_155150-MONOMER"/>
<dbReference type="BioCyc" id="MetaCyc:CHLREDRAFT_155150-MONOMER"/>
<dbReference type="GO" id="GO:0009535">
    <property type="term" value="C:chloroplast thylakoid membrane"/>
    <property type="evidence" value="ECO:0007669"/>
    <property type="project" value="UniProtKB-SubCell"/>
</dbReference>
<dbReference type="GO" id="GO:0009523">
    <property type="term" value="C:photosystem II"/>
    <property type="evidence" value="ECO:0007669"/>
    <property type="project" value="UniProtKB-KW"/>
</dbReference>
<dbReference type="GO" id="GO:0015979">
    <property type="term" value="P:photosynthesis"/>
    <property type="evidence" value="ECO:0007669"/>
    <property type="project" value="UniProtKB-KW"/>
</dbReference>
<dbReference type="InterPro" id="IPR009806">
    <property type="entry name" value="PSII_PsbW_class2"/>
</dbReference>
<dbReference type="PANTHER" id="PTHR34552">
    <property type="entry name" value="PHOTOSYSTEM II REACTION CENTER W PROTEIN, CHLOROPLASTIC"/>
    <property type="match status" value="1"/>
</dbReference>
<dbReference type="PANTHER" id="PTHR34552:SF1">
    <property type="entry name" value="PHOTOSYSTEM II REACTION CENTER W PROTEIN, CHLOROPLASTIC"/>
    <property type="match status" value="1"/>
</dbReference>
<dbReference type="Pfam" id="PF07123">
    <property type="entry name" value="PsbW"/>
    <property type="match status" value="1"/>
</dbReference>
<protein>
    <recommendedName>
        <fullName>Photosystem II reaction center W protein, chloroplastic</fullName>
    </recommendedName>
    <alternativeName>
        <fullName>PSII 6.1 kDa protein</fullName>
    </alternativeName>
</protein>